<name>RFCL_HALS3</name>
<protein>
    <recommendedName>
        <fullName evidence="1">Replication factor C large subunit</fullName>
        <shortName evidence="1">RFC large subunit</shortName>
    </recommendedName>
    <alternativeName>
        <fullName evidence="1">Clamp loader large subunit</fullName>
    </alternativeName>
</protein>
<gene>
    <name evidence="1" type="primary">rfcL</name>
    <name type="ordered locus">OE_3305F</name>
</gene>
<organism>
    <name type="scientific">Halobacterium salinarum (strain ATCC 29341 / DSM 671 / R1)</name>
    <dbReference type="NCBI Taxonomy" id="478009"/>
    <lineage>
        <taxon>Archaea</taxon>
        <taxon>Methanobacteriati</taxon>
        <taxon>Methanobacteriota</taxon>
        <taxon>Stenosarchaea group</taxon>
        <taxon>Halobacteria</taxon>
        <taxon>Halobacteriales</taxon>
        <taxon>Halobacteriaceae</taxon>
        <taxon>Halobacterium</taxon>
        <taxon>Halobacterium salinarum NRC-34001</taxon>
    </lineage>
</organism>
<reference key="1">
    <citation type="journal article" date="2008" name="Genomics">
        <title>Evolution in the laboratory: the genome of Halobacterium salinarum strain R1 compared to that of strain NRC-1.</title>
        <authorList>
            <person name="Pfeiffer F."/>
            <person name="Schuster S.C."/>
            <person name="Broicher A."/>
            <person name="Falb M."/>
            <person name="Palm P."/>
            <person name="Rodewald K."/>
            <person name="Ruepp A."/>
            <person name="Soppa J."/>
            <person name="Tittor J."/>
            <person name="Oesterhelt D."/>
        </authorList>
    </citation>
    <scope>NUCLEOTIDE SEQUENCE [LARGE SCALE GENOMIC DNA]</scope>
    <source>
        <strain>ATCC 29341 / DSM 671 / R1</strain>
    </source>
</reference>
<evidence type="ECO:0000255" key="1">
    <source>
        <dbReference type="HAMAP-Rule" id="MF_01508"/>
    </source>
</evidence>
<evidence type="ECO:0000256" key="2">
    <source>
        <dbReference type="SAM" id="MobiDB-lite"/>
    </source>
</evidence>
<proteinExistence type="inferred from homology"/>
<sequence>MVDWTEKYRPASLSEVRGNDTARDALAEWAETWPDHREAVVVHGSPGIGKTSAAHALANDAGWDVVELNASDQRTADVVERVAGEAARSGTLTGGSGGRKLVLLDEADNLHGNIDRGGSAAITRLVDDAPQPIVLVANEYYEMSSSLRSACREIEFRDVSKRSIVPVLRDVCRREDVTYEEDALAAIAEQNAGDLRSAVNDLQALAEQDRTLTADDVVMGERDRTEGVFDYLDDVIATHSAREALQAAYDVDETPDDLLSWVADNVPKDYRGGELADAYEFLSNADVWLGRVRATQNYAYWRYATDNVAAGVAAARRHDHGGWTRYGPPSYWRKLGSSRATREKRDYVARHIAETAGCSMATARNDVLPFLRVLTHHCKNRELTVAMAAAYELDTEHVAFVTGSGETTNKVASIVADAEERRTDAAVDHSEGAFAGAVREDNTDEDSAADETTDGDEDTGADSQRGLDEFF</sequence>
<dbReference type="EMBL" id="AM774415">
    <property type="protein sequence ID" value="CAP14170.1"/>
    <property type="molecule type" value="Genomic_DNA"/>
</dbReference>
<dbReference type="RefSeq" id="WP_012289363.1">
    <property type="nucleotide sequence ID" value="NC_010364.1"/>
</dbReference>
<dbReference type="SMR" id="B0R601"/>
<dbReference type="EnsemblBacteria" id="CAP14170">
    <property type="protein sequence ID" value="CAP14170"/>
    <property type="gene ID" value="OE_3305F"/>
</dbReference>
<dbReference type="KEGG" id="hsl:OE_3305F"/>
<dbReference type="HOGENOM" id="CLU_027255_1_0_2"/>
<dbReference type="PhylomeDB" id="B0R601"/>
<dbReference type="Proteomes" id="UP000001321">
    <property type="component" value="Chromosome"/>
</dbReference>
<dbReference type="GO" id="GO:0005524">
    <property type="term" value="F:ATP binding"/>
    <property type="evidence" value="ECO:0007669"/>
    <property type="project" value="UniProtKB-UniRule"/>
</dbReference>
<dbReference type="GO" id="GO:0016887">
    <property type="term" value="F:ATP hydrolysis activity"/>
    <property type="evidence" value="ECO:0007669"/>
    <property type="project" value="InterPro"/>
</dbReference>
<dbReference type="GO" id="GO:0003689">
    <property type="term" value="F:DNA clamp loader activity"/>
    <property type="evidence" value="ECO:0007669"/>
    <property type="project" value="UniProtKB-UniRule"/>
</dbReference>
<dbReference type="GO" id="GO:0006260">
    <property type="term" value="P:DNA replication"/>
    <property type="evidence" value="ECO:0007669"/>
    <property type="project" value="UniProtKB-UniRule"/>
</dbReference>
<dbReference type="CDD" id="cd00009">
    <property type="entry name" value="AAA"/>
    <property type="match status" value="1"/>
</dbReference>
<dbReference type="CDD" id="cd18140">
    <property type="entry name" value="HLD_clamp_RFC"/>
    <property type="match status" value="1"/>
</dbReference>
<dbReference type="Gene3D" id="1.10.8.60">
    <property type="match status" value="1"/>
</dbReference>
<dbReference type="Gene3D" id="3.40.50.300">
    <property type="entry name" value="P-loop containing nucleotide triphosphate hydrolases"/>
    <property type="match status" value="1"/>
</dbReference>
<dbReference type="HAMAP" id="MF_01508">
    <property type="entry name" value="RfcL"/>
    <property type="match status" value="1"/>
</dbReference>
<dbReference type="InterPro" id="IPR003593">
    <property type="entry name" value="AAA+_ATPase"/>
</dbReference>
<dbReference type="InterPro" id="IPR003959">
    <property type="entry name" value="ATPase_AAA_core"/>
</dbReference>
<dbReference type="InterPro" id="IPR027417">
    <property type="entry name" value="P-loop_NTPase"/>
</dbReference>
<dbReference type="InterPro" id="IPR023935">
    <property type="entry name" value="Rep_factor-C_lsu"/>
</dbReference>
<dbReference type="InterPro" id="IPR047854">
    <property type="entry name" value="RFC_lid"/>
</dbReference>
<dbReference type="NCBIfam" id="NF003228">
    <property type="entry name" value="PRK04195.1-4"/>
    <property type="match status" value="1"/>
</dbReference>
<dbReference type="NCBIfam" id="NF003229">
    <property type="entry name" value="PRK04195.1-5"/>
    <property type="match status" value="1"/>
</dbReference>
<dbReference type="NCBIfam" id="NF003231">
    <property type="entry name" value="PRK04195.2-1"/>
    <property type="match status" value="1"/>
</dbReference>
<dbReference type="PANTHER" id="PTHR23389">
    <property type="entry name" value="CHROMOSOME TRANSMISSION FIDELITY FACTOR 18"/>
    <property type="match status" value="1"/>
</dbReference>
<dbReference type="PANTHER" id="PTHR23389:SF6">
    <property type="entry name" value="REPLICATION FACTOR C SUBUNIT 1"/>
    <property type="match status" value="1"/>
</dbReference>
<dbReference type="Pfam" id="PF00004">
    <property type="entry name" value="AAA"/>
    <property type="match status" value="1"/>
</dbReference>
<dbReference type="Pfam" id="PF21960">
    <property type="entry name" value="RCF1-5-like_lid"/>
    <property type="match status" value="1"/>
</dbReference>
<dbReference type="SMART" id="SM00382">
    <property type="entry name" value="AAA"/>
    <property type="match status" value="1"/>
</dbReference>
<dbReference type="SUPFAM" id="SSF52540">
    <property type="entry name" value="P-loop containing nucleoside triphosphate hydrolases"/>
    <property type="match status" value="1"/>
</dbReference>
<accession>B0R601</accession>
<feature type="chain" id="PRO_1000195420" description="Replication factor C large subunit">
    <location>
        <begin position="1"/>
        <end position="471"/>
    </location>
</feature>
<feature type="region of interest" description="Disordered" evidence="2">
    <location>
        <begin position="422"/>
        <end position="471"/>
    </location>
</feature>
<feature type="compositionally biased region" description="Basic and acidic residues" evidence="2">
    <location>
        <begin position="422"/>
        <end position="431"/>
    </location>
</feature>
<feature type="compositionally biased region" description="Acidic residues" evidence="2">
    <location>
        <begin position="442"/>
        <end position="460"/>
    </location>
</feature>
<feature type="binding site" evidence="1">
    <location>
        <begin position="44"/>
        <end position="51"/>
    </location>
    <ligand>
        <name>ATP</name>
        <dbReference type="ChEBI" id="CHEBI:30616"/>
    </ligand>
</feature>
<keyword id="KW-0067">ATP-binding</keyword>
<keyword id="KW-0235">DNA replication</keyword>
<keyword id="KW-0547">Nucleotide-binding</keyword>
<comment type="function">
    <text evidence="1">Part of the RFC clamp loader complex which loads the PCNA sliding clamp onto DNA.</text>
</comment>
<comment type="subunit">
    <text evidence="1">Heteromultimer composed of small subunits (RfcS) and large subunits (RfcL).</text>
</comment>
<comment type="similarity">
    <text evidence="1">Belongs to the activator 1 small subunits family. RfcL subfamily.</text>
</comment>